<accession>Q67162</accession>
<organismHost>
    <name type="scientific">Aves</name>
    <dbReference type="NCBI Taxonomy" id="8782"/>
</organismHost>
<organismHost>
    <name type="scientific">Equus caballus</name>
    <name type="common">Horse</name>
    <dbReference type="NCBI Taxonomy" id="9796"/>
</organismHost>
<organismHost>
    <name type="scientific">Homo sapiens</name>
    <name type="common">Human</name>
    <dbReference type="NCBI Taxonomy" id="9606"/>
</organismHost>
<organismHost>
    <name type="scientific">Phocidae</name>
    <name type="common">true seals</name>
    <dbReference type="NCBI Taxonomy" id="9709"/>
</organismHost>
<reference key="1">
    <citation type="journal article" date="1991" name="J. Virol.">
        <title>Evolutionary analysis of the influenza A virus M gene with comparison of the M1 and M2 proteins.</title>
        <authorList>
            <person name="Ito T."/>
            <person name="Gorman O.T."/>
            <person name="Kawaoka Y."/>
            <person name="Bean W.J."/>
            <person name="Webster R.G."/>
        </authorList>
    </citation>
    <scope>NUCLEOTIDE SEQUENCE [GENOMIC RNA]</scope>
</reference>
<reference key="2">
    <citation type="journal article" date="2006" name="Science">
        <title>Large-scale sequence analysis of avian influenza isolates.</title>
        <authorList>
            <person name="Obenauer J.C."/>
            <person name="Denson J."/>
            <person name="Mehta P.K."/>
            <person name="Su X."/>
            <person name="Mukatira S."/>
            <person name="Finkelstein D.B."/>
            <person name="Xu X."/>
            <person name="Wang J."/>
            <person name="Ma J."/>
            <person name="Fan Y."/>
            <person name="Rakestraw K.M."/>
            <person name="Webster R.G."/>
            <person name="Hoffmann E."/>
            <person name="Krauss S."/>
            <person name="Zheng J."/>
            <person name="Zhang Z."/>
            <person name="Naeve C.W."/>
        </authorList>
    </citation>
    <scope>NUCLEOTIDE SEQUENCE [GENOMIC RNA]</scope>
</reference>
<organism>
    <name type="scientific">Influenza A virus (strain A/Chicken/Victoria/1/1985 H7N7)</name>
    <dbReference type="NCBI Taxonomy" id="402520"/>
    <lineage>
        <taxon>Viruses</taxon>
        <taxon>Riboviria</taxon>
        <taxon>Orthornavirae</taxon>
        <taxon>Negarnaviricota</taxon>
        <taxon>Polyploviricotina</taxon>
        <taxon>Insthoviricetes</taxon>
        <taxon>Articulavirales</taxon>
        <taxon>Orthomyxoviridae</taxon>
        <taxon>Alphainfluenzavirus</taxon>
        <taxon>Alphainfluenzavirus influenzae</taxon>
        <taxon>Influenza A virus</taxon>
    </lineage>
</organism>
<feature type="chain" id="PRO_0000326382" description="Matrix protein 2">
    <location>
        <begin position="1"/>
        <end position="97"/>
    </location>
</feature>
<feature type="topological domain" description="Virion surface" evidence="1">
    <location>
        <begin position="1"/>
        <end position="22"/>
    </location>
</feature>
<feature type="transmembrane region" description="Helical; Signal-anchor for type III membrane protein" evidence="1">
    <location>
        <begin position="23"/>
        <end position="43"/>
    </location>
</feature>
<feature type="topological domain" description="Intravirion" evidence="1">
    <location>
        <begin position="44"/>
        <end position="97"/>
    </location>
</feature>
<feature type="region of interest" description="Disordered" evidence="2">
    <location>
        <begin position="60"/>
        <end position="83"/>
    </location>
</feature>
<feature type="site" description="Essential for channel activity, possibly by being protonated during channel activation, and by forming the channel gate and the selective filter" evidence="1">
    <location>
        <position position="37"/>
    </location>
</feature>
<feature type="site" description="Seems to be involved in pH gating" evidence="1">
    <location>
        <position position="41"/>
    </location>
</feature>
<feature type="modified residue" description="Phosphoserine; by host" evidence="1">
    <location>
        <position position="64"/>
    </location>
</feature>
<feature type="modified residue" description="Phosphoserine; by host" evidence="1">
    <location>
        <position position="82"/>
    </location>
</feature>
<feature type="lipid moiety-binding region" description="S-palmitoyl cysteine; by host" evidence="1">
    <location>
        <position position="50"/>
    </location>
</feature>
<feature type="disulfide bond" description="Interchain (with C-17)" evidence="1">
    <location>
        <position position="17"/>
    </location>
</feature>
<feature type="disulfide bond" description="Interchain (with C-19)" evidence="1">
    <location>
        <position position="19"/>
    </location>
</feature>
<comment type="function">
    <text evidence="1">Forms a proton-selective ion channel that is necessary for the efficient release of the viral genome during virus entry. After attaching to the cell surface, the virion enters the cell by endocytosis. Acidification of the endosome triggers M2 ion channel activity. The influx of protons into virion interior is believed to disrupt interactions between the viral ribonucleoprotein (RNP), matrix protein 1 (M1), and lipid bilayers, thereby freeing the viral genome from interaction with viral proteins and enabling RNA segments to migrate to the host cell nucleus, where influenza virus RNA transcription and replication occur. Also plays a role in viral proteins secretory pathway. Elevates the intravesicular pH of normally acidic compartments, such as trans-Golgi network, preventing newly formed hemagglutinin from premature switching to the fusion-active conformation.</text>
</comment>
<comment type="activity regulation">
    <text>The M2 protein from most influenza A strains is inhibited by amantadine and rimantadine, resulting in viral uncoating incapacity. Emergence of amantadine-resistant variants is usually rapid.</text>
</comment>
<comment type="subunit">
    <text evidence="1">Homotetramer; composed of two disulfide-linked dimers held together by non-covalent interactions. May interact with matrix protein 1.</text>
</comment>
<comment type="subcellular location">
    <subcellularLocation>
        <location evidence="1">Virion membrane</location>
    </subcellularLocation>
    <subcellularLocation>
        <location evidence="1">Host apical cell membrane</location>
        <topology evidence="1">Single-pass type III membrane protein</topology>
    </subcellularLocation>
    <text evidence="1">Abundantly expressed at the apical plasma membrane in infected polarized epithelial cells, in close proximity to budding and assembled virions. Minor component of virions (only 16-20 molecules/virion).</text>
</comment>
<comment type="alternative products">
    <event type="alternative splicing"/>
    <isoform>
        <id>Q67162-1</id>
        <name>M2</name>
        <sequence type="displayed"/>
    </isoform>
    <isoform>
        <id>Q67163-1</id>
        <name>M1</name>
        <sequence type="external"/>
    </isoform>
    <text>Only the first 9 residues are shared by the 2 isoforms.</text>
</comment>
<comment type="domain">
    <text evidence="1">Cytoplasmic tail plays an important role in virion assembly and morphogenesis.</text>
</comment>
<comment type="miscellaneous">
    <text evidence="1">When the channel is activated, one or more imidazole moieties of His-37 probably become bi-protonated.</text>
</comment>
<comment type="similarity">
    <text evidence="1">Belongs to the influenza viruses matrix protein M2 family.</text>
</comment>
<gene>
    <name evidence="1" type="primary">M</name>
</gene>
<protein>
    <recommendedName>
        <fullName evidence="1">Matrix protein 2</fullName>
    </recommendedName>
    <alternativeName>
        <fullName evidence="1">Proton channel protein M2</fullName>
    </alternativeName>
</protein>
<dbReference type="EMBL" id="M63523">
    <property type="protein sequence ID" value="AAA43281.1"/>
    <property type="molecule type" value="Genomic_RNA"/>
</dbReference>
<dbReference type="EMBL" id="CY015020">
    <property type="protein sequence ID" value="ABI85020.1"/>
    <property type="molecule type" value="Genomic_RNA"/>
</dbReference>
<dbReference type="SMR" id="Q67162"/>
<dbReference type="GO" id="GO:0020002">
    <property type="term" value="C:host cell plasma membrane"/>
    <property type="evidence" value="ECO:0007669"/>
    <property type="project" value="UniProtKB-SubCell"/>
</dbReference>
<dbReference type="GO" id="GO:0016020">
    <property type="term" value="C:membrane"/>
    <property type="evidence" value="ECO:0007669"/>
    <property type="project" value="UniProtKB-UniRule"/>
</dbReference>
<dbReference type="GO" id="GO:0055036">
    <property type="term" value="C:virion membrane"/>
    <property type="evidence" value="ECO:0007669"/>
    <property type="project" value="UniProtKB-SubCell"/>
</dbReference>
<dbReference type="GO" id="GO:0005216">
    <property type="term" value="F:monoatomic ion channel activity"/>
    <property type="evidence" value="ECO:0007669"/>
    <property type="project" value="UniProtKB-UniRule"/>
</dbReference>
<dbReference type="GO" id="GO:0015078">
    <property type="term" value="F:proton transmembrane transporter activity"/>
    <property type="evidence" value="ECO:0007669"/>
    <property type="project" value="UniProtKB-UniRule"/>
</dbReference>
<dbReference type="GO" id="GO:0051259">
    <property type="term" value="P:protein complex oligomerization"/>
    <property type="evidence" value="ECO:0007669"/>
    <property type="project" value="UniProtKB-UniRule"/>
</dbReference>
<dbReference type="GO" id="GO:0044694">
    <property type="term" value="P:symbiont genome entry into host cell via pore formation in plasma membrane"/>
    <property type="evidence" value="ECO:0007669"/>
    <property type="project" value="UniProtKB-UniRule"/>
</dbReference>
<dbReference type="GO" id="GO:0140321">
    <property type="term" value="P:symbiont-mediated suppression of host autophagy"/>
    <property type="evidence" value="ECO:0007669"/>
    <property type="project" value="UniProtKB-KW"/>
</dbReference>
<dbReference type="Gene3D" id="6.10.250.1640">
    <property type="match status" value="1"/>
</dbReference>
<dbReference type="HAMAP" id="MF_04069">
    <property type="entry name" value="INFV_M2"/>
    <property type="match status" value="1"/>
</dbReference>
<dbReference type="InterPro" id="IPR002089">
    <property type="entry name" value="Flu_M2"/>
</dbReference>
<dbReference type="Pfam" id="PF00599">
    <property type="entry name" value="Flu_M2"/>
    <property type="match status" value="1"/>
</dbReference>
<keyword id="KW-0025">Alternative splicing</keyword>
<keyword id="KW-1015">Disulfide bond</keyword>
<keyword id="KW-1032">Host cell membrane</keyword>
<keyword id="KW-1043">Host membrane</keyword>
<keyword id="KW-0945">Host-virus interaction</keyword>
<keyword id="KW-0375">Hydrogen ion transport</keyword>
<keyword id="KW-1083">Inhibition of host autophagy by virus</keyword>
<keyword id="KW-0407">Ion channel</keyword>
<keyword id="KW-0406">Ion transport</keyword>
<keyword id="KW-0449">Lipoprotein</keyword>
<keyword id="KW-0472">Membrane</keyword>
<keyword id="KW-0564">Palmitate</keyword>
<keyword id="KW-0597">Phosphoprotein</keyword>
<keyword id="KW-0735">Signal-anchor</keyword>
<keyword id="KW-0812">Transmembrane</keyword>
<keyword id="KW-1133">Transmembrane helix</keyword>
<keyword id="KW-0813">Transport</keyword>
<keyword id="KW-1182">Viral ion channel</keyword>
<keyword id="KW-0946">Virion</keyword>
<sequence length="97" mass="11130">MSLLTEVETPTRNGWECKCSDSSDPLVIAASIIGILHLILWILDRLFFKCIYRRLKYGLKRGPSTEGVPESMREEYRQEQQSAVDVDDGHFANIELE</sequence>
<proteinExistence type="inferred from homology"/>
<evidence type="ECO:0000255" key="1">
    <source>
        <dbReference type="HAMAP-Rule" id="MF_04069"/>
    </source>
</evidence>
<evidence type="ECO:0000256" key="2">
    <source>
        <dbReference type="SAM" id="MobiDB-lite"/>
    </source>
</evidence>
<name>M2_I85A3</name>